<gene>
    <name evidence="1" type="primary">dusA</name>
    <name type="ordered locus">PA2795</name>
</gene>
<sequence length="332" mass="36929">MRPEPTNAPAALSRRFSVAPMMDWTDRHCRFFLRQLSRHTLLYTEMVTTGALLHGDRQRFLRYDECEHPLALQLGGSVPAELAACARLAEEAGYDEVNLNVGCPSDRVQHNMIGACLMGHPALVADCVKAMLDAVEIAVTVKHRIGINGRDSYAELCDFVGQVREAGCRSFTVHARIAILEGLSPKENREVPPLRYEVAAQLKKDFPDLEIVLNGGIKTLEACREHLQTFDGVMLGREAYHNPYLLAAVDSQLFGSEAPPLSRSEALLRLRPYIERHQAEGGAMHHVTRHILGLAQGFPGSRRFRQLLSVDVHKAADPLRVFDQALELLAGR</sequence>
<dbReference type="EC" id="1.3.1.-" evidence="1"/>
<dbReference type="EC" id="1.3.1.91" evidence="1"/>
<dbReference type="EMBL" id="AE004091">
    <property type="protein sequence ID" value="AAG06183.1"/>
    <property type="molecule type" value="Genomic_DNA"/>
</dbReference>
<dbReference type="PIR" id="C83295">
    <property type="entry name" value="C83295"/>
</dbReference>
<dbReference type="RefSeq" id="NP_251485.1">
    <property type="nucleotide sequence ID" value="NC_002516.2"/>
</dbReference>
<dbReference type="RefSeq" id="WP_003104050.1">
    <property type="nucleotide sequence ID" value="NZ_QZGE01000011.1"/>
</dbReference>
<dbReference type="SMR" id="Q9I048"/>
<dbReference type="FunCoup" id="Q9I048">
    <property type="interactions" value="309"/>
</dbReference>
<dbReference type="STRING" id="208964.PA2795"/>
<dbReference type="PaxDb" id="208964-PA2795"/>
<dbReference type="DNASU" id="882754"/>
<dbReference type="GeneID" id="882754"/>
<dbReference type="KEGG" id="pae:PA2795"/>
<dbReference type="PATRIC" id="fig|208964.12.peg.2933"/>
<dbReference type="PseudoCAP" id="PA2795"/>
<dbReference type="HOGENOM" id="CLU_013299_2_1_6"/>
<dbReference type="InParanoid" id="Q9I048"/>
<dbReference type="OrthoDB" id="9783413at2"/>
<dbReference type="PhylomeDB" id="Q9I048"/>
<dbReference type="BioCyc" id="PAER208964:G1FZ6-2842-MONOMER"/>
<dbReference type="Proteomes" id="UP000002438">
    <property type="component" value="Chromosome"/>
</dbReference>
<dbReference type="GO" id="GO:0050660">
    <property type="term" value="F:flavin adenine dinucleotide binding"/>
    <property type="evidence" value="ECO:0007669"/>
    <property type="project" value="InterPro"/>
</dbReference>
<dbReference type="GO" id="GO:0010181">
    <property type="term" value="F:FMN binding"/>
    <property type="evidence" value="ECO:0007669"/>
    <property type="project" value="UniProtKB-UniRule"/>
</dbReference>
<dbReference type="GO" id="GO:0000049">
    <property type="term" value="F:tRNA binding"/>
    <property type="evidence" value="ECO:0007669"/>
    <property type="project" value="UniProtKB-UniRule"/>
</dbReference>
<dbReference type="GO" id="GO:0102264">
    <property type="term" value="F:tRNA-dihydrouridine20 synthase activity"/>
    <property type="evidence" value="ECO:0007669"/>
    <property type="project" value="UniProtKB-EC"/>
</dbReference>
<dbReference type="GO" id="GO:0102266">
    <property type="term" value="F:tRNA-dihydrouridine20a synthase activity"/>
    <property type="evidence" value="ECO:0007669"/>
    <property type="project" value="RHEA"/>
</dbReference>
<dbReference type="CDD" id="cd02801">
    <property type="entry name" value="DUS_like_FMN"/>
    <property type="match status" value="1"/>
</dbReference>
<dbReference type="FunFam" id="3.20.20.70:FF:000083">
    <property type="entry name" value="tRNA-dihydrouridine(20/20a) synthase"/>
    <property type="match status" value="1"/>
</dbReference>
<dbReference type="Gene3D" id="1.20.120.1460">
    <property type="match status" value="1"/>
</dbReference>
<dbReference type="Gene3D" id="3.20.20.70">
    <property type="entry name" value="Aldolase class I"/>
    <property type="match status" value="1"/>
</dbReference>
<dbReference type="HAMAP" id="MF_02041">
    <property type="entry name" value="DusA_subfam"/>
    <property type="match status" value="1"/>
</dbReference>
<dbReference type="InterPro" id="IPR013785">
    <property type="entry name" value="Aldolase_TIM"/>
</dbReference>
<dbReference type="InterPro" id="IPR035587">
    <property type="entry name" value="DUS-like_FMN-bd"/>
</dbReference>
<dbReference type="InterPro" id="IPR001269">
    <property type="entry name" value="DUS_fam"/>
</dbReference>
<dbReference type="InterPro" id="IPR004653">
    <property type="entry name" value="DusA"/>
</dbReference>
<dbReference type="InterPro" id="IPR018517">
    <property type="entry name" value="tRNA_hU_synthase_CS"/>
</dbReference>
<dbReference type="NCBIfam" id="NF008774">
    <property type="entry name" value="PRK11815.1"/>
    <property type="match status" value="1"/>
</dbReference>
<dbReference type="NCBIfam" id="TIGR00742">
    <property type="entry name" value="yjbN"/>
    <property type="match status" value="1"/>
</dbReference>
<dbReference type="PANTHER" id="PTHR42907">
    <property type="entry name" value="FMN-LINKED OXIDOREDUCTASES SUPERFAMILY PROTEIN"/>
    <property type="match status" value="1"/>
</dbReference>
<dbReference type="PANTHER" id="PTHR42907:SF1">
    <property type="entry name" value="FMN-LINKED OXIDOREDUCTASES SUPERFAMILY PROTEIN"/>
    <property type="match status" value="1"/>
</dbReference>
<dbReference type="Pfam" id="PF01207">
    <property type="entry name" value="Dus"/>
    <property type="match status" value="1"/>
</dbReference>
<dbReference type="PIRSF" id="PIRSF006621">
    <property type="entry name" value="Dus"/>
    <property type="match status" value="1"/>
</dbReference>
<dbReference type="SUPFAM" id="SSF51395">
    <property type="entry name" value="FMN-linked oxidoreductases"/>
    <property type="match status" value="1"/>
</dbReference>
<dbReference type="PROSITE" id="PS01136">
    <property type="entry name" value="UPF0034"/>
    <property type="match status" value="1"/>
</dbReference>
<protein>
    <recommendedName>
        <fullName evidence="1">tRNA-dihydrouridine(20/20a) synthase</fullName>
        <ecNumber evidence="1">1.3.1.-</ecNumber>
        <ecNumber evidence="1">1.3.1.91</ecNumber>
    </recommendedName>
    <alternativeName>
        <fullName evidence="1">U20-specific dihydrouridine synthase</fullName>
        <shortName evidence="1">U20-specific Dus</shortName>
    </alternativeName>
    <alternativeName>
        <fullName evidence="1">tRNA-dihydrouridine synthase A</fullName>
    </alternativeName>
</protein>
<keyword id="KW-0285">Flavoprotein</keyword>
<keyword id="KW-0288">FMN</keyword>
<keyword id="KW-0521">NADP</keyword>
<keyword id="KW-0560">Oxidoreductase</keyword>
<keyword id="KW-1185">Reference proteome</keyword>
<keyword id="KW-0694">RNA-binding</keyword>
<keyword id="KW-0819">tRNA processing</keyword>
<keyword id="KW-0820">tRNA-binding</keyword>
<evidence type="ECO:0000255" key="1">
    <source>
        <dbReference type="HAMAP-Rule" id="MF_02041"/>
    </source>
</evidence>
<name>DUSA_PSEAE</name>
<proteinExistence type="inferred from homology"/>
<organism>
    <name type="scientific">Pseudomonas aeruginosa (strain ATCC 15692 / DSM 22644 / CIP 104116 / JCM 14847 / LMG 12228 / 1C / PRS 101 / PAO1)</name>
    <dbReference type="NCBI Taxonomy" id="208964"/>
    <lineage>
        <taxon>Bacteria</taxon>
        <taxon>Pseudomonadati</taxon>
        <taxon>Pseudomonadota</taxon>
        <taxon>Gammaproteobacteria</taxon>
        <taxon>Pseudomonadales</taxon>
        <taxon>Pseudomonadaceae</taxon>
        <taxon>Pseudomonas</taxon>
    </lineage>
</organism>
<reference key="1">
    <citation type="journal article" date="2000" name="Nature">
        <title>Complete genome sequence of Pseudomonas aeruginosa PAO1, an opportunistic pathogen.</title>
        <authorList>
            <person name="Stover C.K."/>
            <person name="Pham X.-Q.T."/>
            <person name="Erwin A.L."/>
            <person name="Mizoguchi S.D."/>
            <person name="Warrener P."/>
            <person name="Hickey M.J."/>
            <person name="Brinkman F.S.L."/>
            <person name="Hufnagle W.O."/>
            <person name="Kowalik D.J."/>
            <person name="Lagrou M."/>
            <person name="Garber R.L."/>
            <person name="Goltry L."/>
            <person name="Tolentino E."/>
            <person name="Westbrock-Wadman S."/>
            <person name="Yuan Y."/>
            <person name="Brody L.L."/>
            <person name="Coulter S.N."/>
            <person name="Folger K.R."/>
            <person name="Kas A."/>
            <person name="Larbig K."/>
            <person name="Lim R.M."/>
            <person name="Smith K.A."/>
            <person name="Spencer D.H."/>
            <person name="Wong G.K.-S."/>
            <person name="Wu Z."/>
            <person name="Paulsen I.T."/>
            <person name="Reizer J."/>
            <person name="Saier M.H. Jr."/>
            <person name="Hancock R.E.W."/>
            <person name="Lory S."/>
            <person name="Olson M.V."/>
        </authorList>
    </citation>
    <scope>NUCLEOTIDE SEQUENCE [LARGE SCALE GENOMIC DNA]</scope>
    <source>
        <strain>ATCC 15692 / DSM 22644 / CIP 104116 / JCM 14847 / LMG 12228 / 1C / PRS 101 / PAO1</strain>
    </source>
</reference>
<comment type="function">
    <text evidence="1">Catalyzes the synthesis of 5,6-dihydrouridine (D), a modified base found in the D-loop of most tRNAs, via the reduction of the C5-C6 double bond in target uridines. Specifically modifies U20 and U20a in tRNAs.</text>
</comment>
<comment type="catalytic activity">
    <reaction evidence="1">
        <text>5,6-dihydrouridine(20) in tRNA + NADP(+) = uridine(20) in tRNA + NADPH + H(+)</text>
        <dbReference type="Rhea" id="RHEA:53336"/>
        <dbReference type="Rhea" id="RHEA-COMP:13533"/>
        <dbReference type="Rhea" id="RHEA-COMP:13534"/>
        <dbReference type="ChEBI" id="CHEBI:15378"/>
        <dbReference type="ChEBI" id="CHEBI:57783"/>
        <dbReference type="ChEBI" id="CHEBI:58349"/>
        <dbReference type="ChEBI" id="CHEBI:65315"/>
        <dbReference type="ChEBI" id="CHEBI:74443"/>
        <dbReference type="EC" id="1.3.1.91"/>
    </reaction>
</comment>
<comment type="catalytic activity">
    <reaction evidence="1">
        <text>5,6-dihydrouridine(20) in tRNA + NAD(+) = uridine(20) in tRNA + NADH + H(+)</text>
        <dbReference type="Rhea" id="RHEA:53340"/>
        <dbReference type="Rhea" id="RHEA-COMP:13533"/>
        <dbReference type="Rhea" id="RHEA-COMP:13534"/>
        <dbReference type="ChEBI" id="CHEBI:15378"/>
        <dbReference type="ChEBI" id="CHEBI:57540"/>
        <dbReference type="ChEBI" id="CHEBI:57945"/>
        <dbReference type="ChEBI" id="CHEBI:65315"/>
        <dbReference type="ChEBI" id="CHEBI:74443"/>
        <dbReference type="EC" id="1.3.1.91"/>
    </reaction>
</comment>
<comment type="catalytic activity">
    <reaction evidence="1">
        <text>5,6-dihydrouridine(20a) in tRNA + NADP(+) = uridine(20a) in tRNA + NADPH + H(+)</text>
        <dbReference type="Rhea" id="RHEA:53344"/>
        <dbReference type="Rhea" id="RHEA-COMP:13535"/>
        <dbReference type="Rhea" id="RHEA-COMP:13536"/>
        <dbReference type="ChEBI" id="CHEBI:15378"/>
        <dbReference type="ChEBI" id="CHEBI:57783"/>
        <dbReference type="ChEBI" id="CHEBI:58349"/>
        <dbReference type="ChEBI" id="CHEBI:65315"/>
        <dbReference type="ChEBI" id="CHEBI:74443"/>
    </reaction>
</comment>
<comment type="catalytic activity">
    <reaction evidence="1">
        <text>5,6-dihydrouridine(20a) in tRNA + NAD(+) = uridine(20a) in tRNA + NADH + H(+)</text>
        <dbReference type="Rhea" id="RHEA:53348"/>
        <dbReference type="Rhea" id="RHEA-COMP:13535"/>
        <dbReference type="Rhea" id="RHEA-COMP:13536"/>
        <dbReference type="ChEBI" id="CHEBI:15378"/>
        <dbReference type="ChEBI" id="CHEBI:57540"/>
        <dbReference type="ChEBI" id="CHEBI:57945"/>
        <dbReference type="ChEBI" id="CHEBI:65315"/>
        <dbReference type="ChEBI" id="CHEBI:74443"/>
    </reaction>
</comment>
<comment type="cofactor">
    <cofactor evidence="1">
        <name>FMN</name>
        <dbReference type="ChEBI" id="CHEBI:58210"/>
    </cofactor>
</comment>
<comment type="similarity">
    <text evidence="1">Belongs to the Dus family. DusA subfamily.</text>
</comment>
<accession>Q9I048</accession>
<feature type="chain" id="PRO_0000162069" description="tRNA-dihydrouridine(20/20a) synthase">
    <location>
        <begin position="1"/>
        <end position="332"/>
    </location>
</feature>
<feature type="active site" description="Proton donor" evidence="1">
    <location>
        <position position="103"/>
    </location>
</feature>
<feature type="binding site" evidence="1">
    <location>
        <begin position="20"/>
        <end position="22"/>
    </location>
    <ligand>
        <name>FMN</name>
        <dbReference type="ChEBI" id="CHEBI:58210"/>
    </ligand>
</feature>
<feature type="binding site" evidence="1">
    <location>
        <position position="73"/>
    </location>
    <ligand>
        <name>FMN</name>
        <dbReference type="ChEBI" id="CHEBI:58210"/>
    </ligand>
</feature>
<feature type="binding site" evidence="1">
    <location>
        <position position="142"/>
    </location>
    <ligand>
        <name>FMN</name>
        <dbReference type="ChEBI" id="CHEBI:58210"/>
    </ligand>
</feature>
<feature type="binding site" evidence="1">
    <location>
        <position position="174"/>
    </location>
    <ligand>
        <name>FMN</name>
        <dbReference type="ChEBI" id="CHEBI:58210"/>
    </ligand>
</feature>
<feature type="binding site" evidence="1">
    <location>
        <begin position="214"/>
        <end position="216"/>
    </location>
    <ligand>
        <name>FMN</name>
        <dbReference type="ChEBI" id="CHEBI:58210"/>
    </ligand>
</feature>
<feature type="binding site" evidence="1">
    <location>
        <begin position="236"/>
        <end position="237"/>
    </location>
    <ligand>
        <name>FMN</name>
        <dbReference type="ChEBI" id="CHEBI:58210"/>
    </ligand>
</feature>
<feature type="site" description="Interacts with tRNA" evidence="1">
    <location>
        <position position="100"/>
    </location>
</feature>
<feature type="site" description="Interacts with tRNA; defines subfamily-specific binding signature" evidence="1">
    <location>
        <position position="186"/>
    </location>
</feature>
<feature type="site" description="Interacts with tRNA" evidence="1">
    <location>
        <position position="189"/>
    </location>
</feature>
<feature type="site" description="Interacts with tRNA; defines subfamily-specific binding signature" evidence="1">
    <location>
        <position position="302"/>
    </location>
</feature>
<feature type="site" description="Interacts with tRNA; defines subfamily-specific binding signature" evidence="1">
    <location>
        <position position="305"/>
    </location>
</feature>